<feature type="chain" id="PRO_0000102870" description="Succinate--CoA ligase [ADP-forming] subunit beta 2">
    <location>
        <begin position="1"/>
        <end position="383"/>
    </location>
</feature>
<feature type="domain" description="ATP-grasp" evidence="1">
    <location>
        <begin position="9"/>
        <end position="231"/>
    </location>
</feature>
<feature type="binding site" evidence="1">
    <location>
        <position position="45"/>
    </location>
    <ligand>
        <name>ATP</name>
        <dbReference type="ChEBI" id="CHEBI:30616"/>
    </ligand>
</feature>
<feature type="binding site" evidence="1">
    <location>
        <begin position="52"/>
        <end position="54"/>
    </location>
    <ligand>
        <name>ATP</name>
        <dbReference type="ChEBI" id="CHEBI:30616"/>
    </ligand>
</feature>
<feature type="binding site" evidence="1">
    <location>
        <position position="94"/>
    </location>
    <ligand>
        <name>ATP</name>
        <dbReference type="ChEBI" id="CHEBI:30616"/>
    </ligand>
</feature>
<feature type="binding site" evidence="1">
    <location>
        <position position="99"/>
    </location>
    <ligand>
        <name>ATP</name>
        <dbReference type="ChEBI" id="CHEBI:30616"/>
    </ligand>
</feature>
<feature type="binding site" evidence="1">
    <location>
        <position position="187"/>
    </location>
    <ligand>
        <name>Mg(2+)</name>
        <dbReference type="ChEBI" id="CHEBI:18420"/>
    </ligand>
</feature>
<feature type="binding site" evidence="1">
    <location>
        <position position="201"/>
    </location>
    <ligand>
        <name>Mg(2+)</name>
        <dbReference type="ChEBI" id="CHEBI:18420"/>
    </ligand>
</feature>
<feature type="binding site" evidence="1">
    <location>
        <position position="251"/>
    </location>
    <ligand>
        <name>substrate</name>
        <note>ligand shared with subunit alpha</note>
    </ligand>
</feature>
<feature type="binding site" evidence="1">
    <location>
        <begin position="308"/>
        <end position="310"/>
    </location>
    <ligand>
        <name>substrate</name>
        <note>ligand shared with subunit alpha</note>
    </ligand>
</feature>
<dbReference type="EC" id="6.2.1.5" evidence="1"/>
<dbReference type="EMBL" id="AL939128">
    <property type="protein sequence ID" value="CAA19778.1"/>
    <property type="molecule type" value="Genomic_DNA"/>
</dbReference>
<dbReference type="PIR" id="T35773">
    <property type="entry name" value="T35773"/>
</dbReference>
<dbReference type="RefSeq" id="NP_630664.1">
    <property type="nucleotide sequence ID" value="NC_003888.3"/>
</dbReference>
<dbReference type="RefSeq" id="WP_011031022.1">
    <property type="nucleotide sequence ID" value="NZ_VNID01000002.1"/>
</dbReference>
<dbReference type="SMR" id="O87840"/>
<dbReference type="STRING" id="100226.gene:17764242"/>
<dbReference type="PaxDb" id="100226-SCO6585"/>
<dbReference type="KEGG" id="sco:SCO6585"/>
<dbReference type="PATRIC" id="fig|100226.15.peg.6690"/>
<dbReference type="eggNOG" id="COG0045">
    <property type="taxonomic scope" value="Bacteria"/>
</dbReference>
<dbReference type="HOGENOM" id="CLU_037430_0_2_11"/>
<dbReference type="InParanoid" id="O87840"/>
<dbReference type="OrthoDB" id="9802602at2"/>
<dbReference type="PhylomeDB" id="O87840"/>
<dbReference type="UniPathway" id="UPA00223">
    <property type="reaction ID" value="UER00999"/>
</dbReference>
<dbReference type="Proteomes" id="UP000001973">
    <property type="component" value="Chromosome"/>
</dbReference>
<dbReference type="GO" id="GO:0005829">
    <property type="term" value="C:cytosol"/>
    <property type="evidence" value="ECO:0000318"/>
    <property type="project" value="GO_Central"/>
</dbReference>
<dbReference type="GO" id="GO:0042709">
    <property type="term" value="C:succinate-CoA ligase complex"/>
    <property type="evidence" value="ECO:0000318"/>
    <property type="project" value="GO_Central"/>
</dbReference>
<dbReference type="GO" id="GO:0005524">
    <property type="term" value="F:ATP binding"/>
    <property type="evidence" value="ECO:0007669"/>
    <property type="project" value="UniProtKB-UniRule"/>
</dbReference>
<dbReference type="GO" id="GO:0000287">
    <property type="term" value="F:magnesium ion binding"/>
    <property type="evidence" value="ECO:0007669"/>
    <property type="project" value="UniProtKB-UniRule"/>
</dbReference>
<dbReference type="GO" id="GO:0004775">
    <property type="term" value="F:succinate-CoA ligase (ADP-forming) activity"/>
    <property type="evidence" value="ECO:0000318"/>
    <property type="project" value="GO_Central"/>
</dbReference>
<dbReference type="GO" id="GO:0004776">
    <property type="term" value="F:succinate-CoA ligase (GDP-forming) activity"/>
    <property type="evidence" value="ECO:0007669"/>
    <property type="project" value="RHEA"/>
</dbReference>
<dbReference type="GO" id="GO:0006104">
    <property type="term" value="P:succinyl-CoA metabolic process"/>
    <property type="evidence" value="ECO:0000318"/>
    <property type="project" value="GO_Central"/>
</dbReference>
<dbReference type="GO" id="GO:0006099">
    <property type="term" value="P:tricarboxylic acid cycle"/>
    <property type="evidence" value="ECO:0000318"/>
    <property type="project" value="GO_Central"/>
</dbReference>
<dbReference type="FunFam" id="3.30.1490.20:FF:000014">
    <property type="entry name" value="Succinate--CoA ligase [ADP-forming] subunit beta"/>
    <property type="match status" value="1"/>
</dbReference>
<dbReference type="FunFam" id="3.30.470.20:FF:000002">
    <property type="entry name" value="Succinate--CoA ligase [ADP-forming] subunit beta"/>
    <property type="match status" value="1"/>
</dbReference>
<dbReference type="FunFam" id="3.40.50.261:FF:000007">
    <property type="entry name" value="Succinate--CoA ligase [ADP-forming] subunit beta"/>
    <property type="match status" value="1"/>
</dbReference>
<dbReference type="Gene3D" id="3.30.1490.20">
    <property type="entry name" value="ATP-grasp fold, A domain"/>
    <property type="match status" value="1"/>
</dbReference>
<dbReference type="Gene3D" id="3.30.470.20">
    <property type="entry name" value="ATP-grasp fold, B domain"/>
    <property type="match status" value="1"/>
</dbReference>
<dbReference type="Gene3D" id="3.40.50.261">
    <property type="entry name" value="Succinyl-CoA synthetase domains"/>
    <property type="match status" value="1"/>
</dbReference>
<dbReference type="HAMAP" id="MF_00558">
    <property type="entry name" value="Succ_CoA_beta"/>
    <property type="match status" value="1"/>
</dbReference>
<dbReference type="InterPro" id="IPR011761">
    <property type="entry name" value="ATP-grasp"/>
</dbReference>
<dbReference type="InterPro" id="IPR013650">
    <property type="entry name" value="ATP-grasp_succ-CoA_synth-type"/>
</dbReference>
<dbReference type="InterPro" id="IPR013815">
    <property type="entry name" value="ATP_grasp_subdomain_1"/>
</dbReference>
<dbReference type="InterPro" id="IPR017866">
    <property type="entry name" value="Succ-CoA_synthase_bsu_CS"/>
</dbReference>
<dbReference type="InterPro" id="IPR005811">
    <property type="entry name" value="SUCC_ACL_C"/>
</dbReference>
<dbReference type="InterPro" id="IPR005809">
    <property type="entry name" value="Succ_CoA_ligase-like_bsu"/>
</dbReference>
<dbReference type="InterPro" id="IPR016102">
    <property type="entry name" value="Succinyl-CoA_synth-like"/>
</dbReference>
<dbReference type="NCBIfam" id="NF001913">
    <property type="entry name" value="PRK00696.1"/>
    <property type="match status" value="1"/>
</dbReference>
<dbReference type="NCBIfam" id="TIGR01016">
    <property type="entry name" value="sucCoAbeta"/>
    <property type="match status" value="1"/>
</dbReference>
<dbReference type="PANTHER" id="PTHR11815:SF10">
    <property type="entry name" value="SUCCINATE--COA LIGASE [GDP-FORMING] SUBUNIT BETA, MITOCHONDRIAL"/>
    <property type="match status" value="1"/>
</dbReference>
<dbReference type="PANTHER" id="PTHR11815">
    <property type="entry name" value="SUCCINYL-COA SYNTHETASE BETA CHAIN"/>
    <property type="match status" value="1"/>
</dbReference>
<dbReference type="Pfam" id="PF08442">
    <property type="entry name" value="ATP-grasp_2"/>
    <property type="match status" value="1"/>
</dbReference>
<dbReference type="Pfam" id="PF00549">
    <property type="entry name" value="Ligase_CoA"/>
    <property type="match status" value="1"/>
</dbReference>
<dbReference type="PIRSF" id="PIRSF001554">
    <property type="entry name" value="SucCS_beta"/>
    <property type="match status" value="1"/>
</dbReference>
<dbReference type="SUPFAM" id="SSF56059">
    <property type="entry name" value="Glutathione synthetase ATP-binding domain-like"/>
    <property type="match status" value="1"/>
</dbReference>
<dbReference type="SUPFAM" id="SSF52210">
    <property type="entry name" value="Succinyl-CoA synthetase domains"/>
    <property type="match status" value="1"/>
</dbReference>
<dbReference type="PROSITE" id="PS50975">
    <property type="entry name" value="ATP_GRASP"/>
    <property type="match status" value="1"/>
</dbReference>
<dbReference type="PROSITE" id="PS01217">
    <property type="entry name" value="SUCCINYL_COA_LIG_3"/>
    <property type="match status" value="1"/>
</dbReference>
<evidence type="ECO:0000255" key="1">
    <source>
        <dbReference type="HAMAP-Rule" id="MF_00558"/>
    </source>
</evidence>
<gene>
    <name evidence="1" type="primary">sucC2</name>
    <name type="synonym">sucC</name>
    <name type="ordered locus">SCO6585</name>
    <name type="ORF">SC8A6.06</name>
</gene>
<organism>
    <name type="scientific">Streptomyces coelicolor (strain ATCC BAA-471 / A3(2) / M145)</name>
    <dbReference type="NCBI Taxonomy" id="100226"/>
    <lineage>
        <taxon>Bacteria</taxon>
        <taxon>Bacillati</taxon>
        <taxon>Actinomycetota</taxon>
        <taxon>Actinomycetes</taxon>
        <taxon>Kitasatosporales</taxon>
        <taxon>Streptomycetaceae</taxon>
        <taxon>Streptomyces</taxon>
        <taxon>Streptomyces albidoflavus group</taxon>
    </lineage>
</organism>
<keyword id="KW-0067">ATP-binding</keyword>
<keyword id="KW-0436">Ligase</keyword>
<keyword id="KW-0460">Magnesium</keyword>
<keyword id="KW-0479">Metal-binding</keyword>
<keyword id="KW-0547">Nucleotide-binding</keyword>
<keyword id="KW-1185">Reference proteome</keyword>
<keyword id="KW-0816">Tricarboxylic acid cycle</keyword>
<name>SUCC2_STRCO</name>
<reference key="1">
    <citation type="journal article" date="2002" name="Nature">
        <title>Complete genome sequence of the model actinomycete Streptomyces coelicolor A3(2).</title>
        <authorList>
            <person name="Bentley S.D."/>
            <person name="Chater K.F."/>
            <person name="Cerdeno-Tarraga A.-M."/>
            <person name="Challis G.L."/>
            <person name="Thomson N.R."/>
            <person name="James K.D."/>
            <person name="Harris D.E."/>
            <person name="Quail M.A."/>
            <person name="Kieser H."/>
            <person name="Harper D."/>
            <person name="Bateman A."/>
            <person name="Brown S."/>
            <person name="Chandra G."/>
            <person name="Chen C.W."/>
            <person name="Collins M."/>
            <person name="Cronin A."/>
            <person name="Fraser A."/>
            <person name="Goble A."/>
            <person name="Hidalgo J."/>
            <person name="Hornsby T."/>
            <person name="Howarth S."/>
            <person name="Huang C.-H."/>
            <person name="Kieser T."/>
            <person name="Larke L."/>
            <person name="Murphy L.D."/>
            <person name="Oliver K."/>
            <person name="O'Neil S."/>
            <person name="Rabbinowitsch E."/>
            <person name="Rajandream M.A."/>
            <person name="Rutherford K.M."/>
            <person name="Rutter S."/>
            <person name="Seeger K."/>
            <person name="Saunders D."/>
            <person name="Sharp S."/>
            <person name="Squares R."/>
            <person name="Squares S."/>
            <person name="Taylor K."/>
            <person name="Warren T."/>
            <person name="Wietzorrek A."/>
            <person name="Woodward J.R."/>
            <person name="Barrell B.G."/>
            <person name="Parkhill J."/>
            <person name="Hopwood D.A."/>
        </authorList>
    </citation>
    <scope>NUCLEOTIDE SEQUENCE [LARGE SCALE GENOMIC DNA]</scope>
    <source>
        <strain>ATCC BAA-471 / A3(2) / M145</strain>
    </source>
</reference>
<sequence>MDLYEHQARELFKEHGIVVPRAEVTDSPERAREIARALGGRAVVKAQVKTGGRGKAGGVRLAADPAEAEEAARHILGMDIRGHTVDTVMLAEPCEIEREFYVSYVLDRASGGFLAIASAEGGTEIEEVAARRPEAVARIPVDPATGVHTATAVRIADAAGLPPQTVDTLVRLWKVLVREDALLVEVNPLVRTAEGRIVALDGKVTLDDNARFRQSRWGETRQEDADSLEARAGAKGLNYVKLDGEVGVIGNGAGLVMSTLDVVAGCGARPANFLDIGGGASARVMADGLSVVLSDPDVRSVLVNVFGGITACDAVADGIVRALDEVRLTKPLVVRLDGNNAARGRALLDARAHPLVEQATTMDGAARRAARLATAASTAGQAG</sequence>
<proteinExistence type="inferred from homology"/>
<comment type="function">
    <text evidence="1">Succinyl-CoA synthetase functions in the citric acid cycle (TCA), coupling the hydrolysis of succinyl-CoA to the synthesis of either ATP or GTP and thus represents the only step of substrate-level phosphorylation in the TCA. The beta subunit provides nucleotide specificity of the enzyme and binds the substrate succinate, while the binding sites for coenzyme A and phosphate are found in the alpha subunit.</text>
</comment>
<comment type="catalytic activity">
    <reaction evidence="1">
        <text>succinate + ATP + CoA = succinyl-CoA + ADP + phosphate</text>
        <dbReference type="Rhea" id="RHEA:17661"/>
        <dbReference type="ChEBI" id="CHEBI:30031"/>
        <dbReference type="ChEBI" id="CHEBI:30616"/>
        <dbReference type="ChEBI" id="CHEBI:43474"/>
        <dbReference type="ChEBI" id="CHEBI:57287"/>
        <dbReference type="ChEBI" id="CHEBI:57292"/>
        <dbReference type="ChEBI" id="CHEBI:456216"/>
        <dbReference type="EC" id="6.2.1.5"/>
    </reaction>
    <physiologicalReaction direction="right-to-left" evidence="1">
        <dbReference type="Rhea" id="RHEA:17663"/>
    </physiologicalReaction>
</comment>
<comment type="catalytic activity">
    <reaction evidence="1">
        <text>GTP + succinate + CoA = succinyl-CoA + GDP + phosphate</text>
        <dbReference type="Rhea" id="RHEA:22120"/>
        <dbReference type="ChEBI" id="CHEBI:30031"/>
        <dbReference type="ChEBI" id="CHEBI:37565"/>
        <dbReference type="ChEBI" id="CHEBI:43474"/>
        <dbReference type="ChEBI" id="CHEBI:57287"/>
        <dbReference type="ChEBI" id="CHEBI:57292"/>
        <dbReference type="ChEBI" id="CHEBI:58189"/>
    </reaction>
    <physiologicalReaction direction="right-to-left" evidence="1">
        <dbReference type="Rhea" id="RHEA:22122"/>
    </physiologicalReaction>
</comment>
<comment type="cofactor">
    <cofactor evidence="1">
        <name>Mg(2+)</name>
        <dbReference type="ChEBI" id="CHEBI:18420"/>
    </cofactor>
    <text evidence="1">Binds 1 Mg(2+) ion per subunit.</text>
</comment>
<comment type="pathway">
    <text evidence="1">Carbohydrate metabolism; tricarboxylic acid cycle; succinate from succinyl-CoA (ligase route): step 1/1.</text>
</comment>
<comment type="subunit">
    <text evidence="1">Heterotetramer of two alpha and two beta subunits.</text>
</comment>
<comment type="similarity">
    <text evidence="1">Belongs to the succinate/malate CoA ligase beta subunit family.</text>
</comment>
<accession>O87840</accession>
<protein>
    <recommendedName>
        <fullName evidence="1">Succinate--CoA ligase [ADP-forming] subunit beta 2</fullName>
        <ecNumber evidence="1">6.2.1.5</ecNumber>
    </recommendedName>
    <alternativeName>
        <fullName evidence="1">Succinyl-CoA synthetase subunit beta 2</fullName>
        <shortName evidence="1">SCS-beta 2</shortName>
    </alternativeName>
</protein>